<accession>Q85433</accession>
<proteinExistence type="evidence at transcript level"/>
<protein>
    <recommendedName>
        <fullName>Subgenomic capsid protein VP60</fullName>
    </recommendedName>
</protein>
<reference key="1">
    <citation type="journal article" date="1996" name="J. Virol.">
        <title>Detection and preliminary characterization of a new rabbit calicivirus related to rabbit hemorrhagic disease virus but nonpathogenic.</title>
        <authorList>
            <person name="Capucci L."/>
            <person name="Fusi P."/>
            <person name="Lavazza A."/>
            <person name="Pacciarini M.L."/>
            <person name="Rossi C."/>
        </authorList>
    </citation>
    <scope>NUCLEOTIDE SEQUENCE [MRNA]</scope>
</reference>
<comment type="function">
    <text evidence="1">Capsid protein VP60 self assembles to form an icosahedral capsid with a T=3 symmetry, about 35 nm in diameter, and consisting of 180 capsid proteins. A smaller form of capsid with a diameter of 23 nm might be capsid proteins assembled as icosahedron with T=1 symmetry. The capsid encapsulate VP2 proteins and genomic or subgenomic RNA. Attaches virion to target cells by binding histo-blood group antigens, inducing endocytosis of the viral particle. Acidification of the endosome induces conformational change of capsid protein thereby injecting virus genomic RNA into host cytoplasm (By similarity).</text>
</comment>
<comment type="subunit">
    <text evidence="1">Homodimerizes, then multimerizes. Binds to histo-blood group antigens at surface of target cells (By similarity).</text>
</comment>
<comment type="subcellular location">
    <subcellularLocation>
        <location>Virion</location>
    </subcellularLocation>
    <subcellularLocation>
        <location evidence="1">Host cytoplasm</location>
    </subcellularLocation>
</comment>
<comment type="PTM">
    <text evidence="1">The N-terminus is blocked.</text>
</comment>
<comment type="miscellaneous">
    <text evidence="1">Two different RNAs lead the expression of the capsid protein. One arises from the cleavage of the polyprotein translated from the genomic RNA and the other from the translation of a subgenomic RNA derived from the (-)RNA template. Capsid protein expressed from the subgenomic mRNA is produced in much larger amounts than the cleaved one (By similarity).</text>
</comment>
<comment type="similarity">
    <text evidence="3">Belongs to the caliciviridae capsid protein family.</text>
</comment>
<keyword id="KW-0167">Capsid protein</keyword>
<keyword id="KW-1035">Host cytoplasm</keyword>
<keyword id="KW-1142">T=3 icosahedral capsid protein</keyword>
<keyword id="KW-0946">Virion</keyword>
<feature type="chain" id="PRO_0000100120" description="Subgenomic capsid protein VP60">
    <location>
        <begin position="1"/>
        <end position="576"/>
    </location>
</feature>
<feature type="region of interest" description="Disordered" evidence="2">
    <location>
        <begin position="1"/>
        <end position="31"/>
    </location>
</feature>
<feature type="compositionally biased region" description="Low complexity" evidence="2">
    <location>
        <begin position="13"/>
        <end position="29"/>
    </location>
</feature>
<dbReference type="EMBL" id="X96868">
    <property type="protein sequence ID" value="CAA65611.1"/>
    <property type="molecule type" value="mRNA"/>
</dbReference>
<dbReference type="SMR" id="Q85433"/>
<dbReference type="GO" id="GO:0030430">
    <property type="term" value="C:host cell cytoplasm"/>
    <property type="evidence" value="ECO:0007669"/>
    <property type="project" value="UniProtKB-SubCell"/>
</dbReference>
<dbReference type="GO" id="GO:0039617">
    <property type="term" value="C:T=3 icosahedral viral capsid"/>
    <property type="evidence" value="ECO:0007669"/>
    <property type="project" value="UniProtKB-KW"/>
</dbReference>
<dbReference type="CDD" id="cd00205">
    <property type="entry name" value="rhv_like"/>
    <property type="match status" value="1"/>
</dbReference>
<dbReference type="Gene3D" id="2.60.120.20">
    <property type="match status" value="1"/>
</dbReference>
<dbReference type="InterPro" id="IPR004005">
    <property type="entry name" value="Calicivirus_coat"/>
</dbReference>
<dbReference type="InterPro" id="IPR033703">
    <property type="entry name" value="Rhv-like"/>
</dbReference>
<dbReference type="InterPro" id="IPR029053">
    <property type="entry name" value="Viral_coat"/>
</dbReference>
<dbReference type="Pfam" id="PF00915">
    <property type="entry name" value="Calici_coat"/>
    <property type="match status" value="1"/>
</dbReference>
<dbReference type="SUPFAM" id="SSF88633">
    <property type="entry name" value="Positive stranded ssRNA viruses"/>
    <property type="match status" value="1"/>
</dbReference>
<organismHost>
    <name type="scientific">Oryctolagus cuniculus</name>
    <name type="common">Rabbit</name>
    <dbReference type="NCBI Taxonomy" id="9986"/>
</organismHost>
<evidence type="ECO:0000250" key="1"/>
<evidence type="ECO:0000256" key="2">
    <source>
        <dbReference type="SAM" id="MobiDB-lite"/>
    </source>
</evidence>
<evidence type="ECO:0000305" key="3"/>
<organism>
    <name type="scientific">Rabbit calicivirus</name>
    <name type="common">Ra/LV/RHDV/RCV/1995/IT</name>
    <name type="synonym">RHDV</name>
    <dbReference type="NCBI Taxonomy" id="314539"/>
    <lineage>
        <taxon>Viruses</taxon>
        <taxon>Riboviria</taxon>
        <taxon>Orthornavirae</taxon>
        <taxon>Pisuviricota</taxon>
        <taxon>Pisoniviricetes</taxon>
        <taxon>Picornavirales</taxon>
        <taxon>Caliciviridae</taxon>
        <taxon>Lagovirus</taxon>
        <taxon>Rabbit hemorrhagic disease virus</taxon>
    </lineage>
</organism>
<sequence length="576" mass="60151">MEGKARITPQGEAAGTATTASVPGTTTDGMDPGVVATTSVVTTENASTSVATAGIGGPPQQVDQQETWRTNFYYNDVFTWSVADAPGSILYTVQHSPQNNPFTAVLSQMYAGWAGGMQFRFIVAGSGVFGGRLVAAVIPPGIEIGPGLEVRQFPHVVIDARSLEPVTITMPDLRPNMYHPTGDPGLVPTLVLSVYNNLINPFGGSTSAIQVTVETRPSEDFEFVMIRAPSSKTVDSVTPAGLLTTPVLTGVGTDNRWNCQIVGLQPVPGGLSTCNRHWNLNGSTYGWSSPRFTDIDHRRGASQPGGNNVLQFWYANAGSAVDNPICQVAPDGFPDMSFVPLNGPNVPTAGWVGFGAIWNSNSGAPNVTTVQAYELGFATGAPNNLQPATNTSGSQIVAKSIYAVSTGANQNPAGLFVMASGVISTPTARAITYTPQPDRIVNAPGTPAAAPVGKNVPIMFASVVRRTGDVNAEAGSDNGTQYGTGSQPLPVTIGLSLNNYSSALTPGQFFVWQLNFASGFMEIGLNVDGYFYAGTGASTTLIDLTELIDIRPVGPRPSTSTLVFNLGGATSGFSYV</sequence>
<name>CAPSD_RHDVR</name>